<gene>
    <name evidence="1" type="primary">rpsR</name>
    <name type="ordered locus">Msil_0899</name>
</gene>
<sequence length="80" mass="9234">MTTTAAPRRPFFRRRKTCPFSGPNAPKIDYKDTRLLSRYISERGKIVPSRITAVSAKKQRELAQAIKRARFLGLLPYVIR</sequence>
<feature type="chain" id="PRO_1000196522" description="Small ribosomal subunit protein bS18">
    <location>
        <begin position="1"/>
        <end position="80"/>
    </location>
</feature>
<accession>B8ESH9</accession>
<keyword id="KW-1185">Reference proteome</keyword>
<keyword id="KW-0687">Ribonucleoprotein</keyword>
<keyword id="KW-0689">Ribosomal protein</keyword>
<keyword id="KW-0694">RNA-binding</keyword>
<keyword id="KW-0699">rRNA-binding</keyword>
<protein>
    <recommendedName>
        <fullName evidence="1">Small ribosomal subunit protein bS18</fullName>
    </recommendedName>
    <alternativeName>
        <fullName evidence="2">30S ribosomal protein S18</fullName>
    </alternativeName>
</protein>
<comment type="function">
    <text evidence="1">Binds as a heterodimer with protein bS6 to the central domain of the 16S rRNA, where it helps stabilize the platform of the 30S subunit.</text>
</comment>
<comment type="subunit">
    <text evidence="1">Part of the 30S ribosomal subunit. Forms a tight heterodimer with protein bS6.</text>
</comment>
<comment type="similarity">
    <text evidence="1">Belongs to the bacterial ribosomal protein bS18 family.</text>
</comment>
<organism>
    <name type="scientific">Methylocella silvestris (strain DSM 15510 / CIP 108128 / LMG 27833 / NCIMB 13906 / BL2)</name>
    <dbReference type="NCBI Taxonomy" id="395965"/>
    <lineage>
        <taxon>Bacteria</taxon>
        <taxon>Pseudomonadati</taxon>
        <taxon>Pseudomonadota</taxon>
        <taxon>Alphaproteobacteria</taxon>
        <taxon>Hyphomicrobiales</taxon>
        <taxon>Beijerinckiaceae</taxon>
        <taxon>Methylocella</taxon>
    </lineage>
</organism>
<name>RS18_METSB</name>
<evidence type="ECO:0000255" key="1">
    <source>
        <dbReference type="HAMAP-Rule" id="MF_00270"/>
    </source>
</evidence>
<evidence type="ECO:0000305" key="2"/>
<dbReference type="EMBL" id="CP001280">
    <property type="protein sequence ID" value="ACK49869.1"/>
    <property type="molecule type" value="Genomic_DNA"/>
</dbReference>
<dbReference type="RefSeq" id="WP_012589939.1">
    <property type="nucleotide sequence ID" value="NC_011666.1"/>
</dbReference>
<dbReference type="SMR" id="B8ESH9"/>
<dbReference type="STRING" id="395965.Msil_0899"/>
<dbReference type="KEGG" id="msl:Msil_0899"/>
<dbReference type="eggNOG" id="COG0238">
    <property type="taxonomic scope" value="Bacteria"/>
</dbReference>
<dbReference type="HOGENOM" id="CLU_148710_2_3_5"/>
<dbReference type="OrthoDB" id="9812008at2"/>
<dbReference type="Proteomes" id="UP000002257">
    <property type="component" value="Chromosome"/>
</dbReference>
<dbReference type="GO" id="GO:0022627">
    <property type="term" value="C:cytosolic small ribosomal subunit"/>
    <property type="evidence" value="ECO:0007669"/>
    <property type="project" value="TreeGrafter"/>
</dbReference>
<dbReference type="GO" id="GO:0070181">
    <property type="term" value="F:small ribosomal subunit rRNA binding"/>
    <property type="evidence" value="ECO:0007669"/>
    <property type="project" value="TreeGrafter"/>
</dbReference>
<dbReference type="GO" id="GO:0003735">
    <property type="term" value="F:structural constituent of ribosome"/>
    <property type="evidence" value="ECO:0007669"/>
    <property type="project" value="InterPro"/>
</dbReference>
<dbReference type="GO" id="GO:0006412">
    <property type="term" value="P:translation"/>
    <property type="evidence" value="ECO:0007669"/>
    <property type="project" value="UniProtKB-UniRule"/>
</dbReference>
<dbReference type="Gene3D" id="4.10.640.10">
    <property type="entry name" value="Ribosomal protein S18"/>
    <property type="match status" value="1"/>
</dbReference>
<dbReference type="HAMAP" id="MF_00270">
    <property type="entry name" value="Ribosomal_bS18"/>
    <property type="match status" value="1"/>
</dbReference>
<dbReference type="InterPro" id="IPR001648">
    <property type="entry name" value="Ribosomal_bS18"/>
</dbReference>
<dbReference type="InterPro" id="IPR018275">
    <property type="entry name" value="Ribosomal_bS18_CS"/>
</dbReference>
<dbReference type="InterPro" id="IPR036870">
    <property type="entry name" value="Ribosomal_bS18_sf"/>
</dbReference>
<dbReference type="NCBIfam" id="TIGR00165">
    <property type="entry name" value="S18"/>
    <property type="match status" value="1"/>
</dbReference>
<dbReference type="PANTHER" id="PTHR13479">
    <property type="entry name" value="30S RIBOSOMAL PROTEIN S18"/>
    <property type="match status" value="1"/>
</dbReference>
<dbReference type="PANTHER" id="PTHR13479:SF40">
    <property type="entry name" value="SMALL RIBOSOMAL SUBUNIT PROTEIN BS18M"/>
    <property type="match status" value="1"/>
</dbReference>
<dbReference type="Pfam" id="PF01084">
    <property type="entry name" value="Ribosomal_S18"/>
    <property type="match status" value="1"/>
</dbReference>
<dbReference type="PRINTS" id="PR00974">
    <property type="entry name" value="RIBOSOMALS18"/>
</dbReference>
<dbReference type="SUPFAM" id="SSF46911">
    <property type="entry name" value="Ribosomal protein S18"/>
    <property type="match status" value="1"/>
</dbReference>
<dbReference type="PROSITE" id="PS00057">
    <property type="entry name" value="RIBOSOMAL_S18"/>
    <property type="match status" value="1"/>
</dbReference>
<proteinExistence type="inferred from homology"/>
<reference key="1">
    <citation type="journal article" date="2010" name="J. Bacteriol.">
        <title>Complete genome sequence of the aerobic facultative methanotroph Methylocella silvestris BL2.</title>
        <authorList>
            <person name="Chen Y."/>
            <person name="Crombie A."/>
            <person name="Rahman M.T."/>
            <person name="Dedysh S.N."/>
            <person name="Liesack W."/>
            <person name="Stott M.B."/>
            <person name="Alam M."/>
            <person name="Theisen A.R."/>
            <person name="Murrell J.C."/>
            <person name="Dunfield P.F."/>
        </authorList>
    </citation>
    <scope>NUCLEOTIDE SEQUENCE [LARGE SCALE GENOMIC DNA]</scope>
    <source>
        <strain>DSM 15510 / CIP 108128 / LMG 27833 / NCIMB 13906 / BL2</strain>
    </source>
</reference>